<keyword id="KW-0032">Aminotransferase</keyword>
<keyword id="KW-0046">Antibiotic resistance</keyword>
<keyword id="KW-0441">Lipid A biosynthesis</keyword>
<keyword id="KW-0444">Lipid biosynthesis</keyword>
<keyword id="KW-0443">Lipid metabolism</keyword>
<keyword id="KW-0448">Lipopolysaccharide biosynthesis</keyword>
<keyword id="KW-0663">Pyridoxal phosphate</keyword>
<keyword id="KW-0808">Transferase</keyword>
<proteinExistence type="inferred from homology"/>
<sequence>MTDFLPFSRPSMGEEEIAAVAEVLRSGWITTGPKCQQLEQAFCQQVGCRQAIAVSSATGGMHVTLMALGIGPGDEVITPSQTWVSTVNMITLLGAEPVMVDVDRHTLMVRPQDIEAAITPKTKAIIPVHYAGAPADLTALRTLSERYGIPLIEDAAHAVGTQYRDEWIGARGTAIFSFHAIKNITCAEGGMVVTDDEALAERIRSLKFHGLGVDAFDRQRQGRKPQAEVVTPGFKYNLADINAAIALVQLDKLPAINARRQQLAARYLTQLRSLPLQPLAVPDYPHLHAWHLFMVRVDETRCGISRDGLMAALQTHGIGTGLHFRAVHTQKYYRERYPHLHLPETEWNSASLMTLPLFPDMQDSDVDRVVVALTSILESVRD</sequence>
<feature type="chain" id="PRO_1000213734" description="UDP-4-amino-4-deoxy-L-arabinose--oxoglutarate aminotransferase">
    <location>
        <begin position="1"/>
        <end position="382"/>
    </location>
</feature>
<feature type="modified residue" description="N6-(pyridoxal phosphate)lysine" evidence="1">
    <location>
        <position position="182"/>
    </location>
</feature>
<evidence type="ECO:0000255" key="1">
    <source>
        <dbReference type="HAMAP-Rule" id="MF_01167"/>
    </source>
</evidence>
<organism>
    <name type="scientific">Pectobacterium carotovorum subsp. carotovorum (strain PC1)</name>
    <dbReference type="NCBI Taxonomy" id="561230"/>
    <lineage>
        <taxon>Bacteria</taxon>
        <taxon>Pseudomonadati</taxon>
        <taxon>Pseudomonadota</taxon>
        <taxon>Gammaproteobacteria</taxon>
        <taxon>Enterobacterales</taxon>
        <taxon>Pectobacteriaceae</taxon>
        <taxon>Pectobacterium</taxon>
    </lineage>
</organism>
<accession>C6DAW7</accession>
<dbReference type="EC" id="2.6.1.87" evidence="1"/>
<dbReference type="EMBL" id="CP001657">
    <property type="protein sequence ID" value="ACT13951.1"/>
    <property type="molecule type" value="Genomic_DNA"/>
</dbReference>
<dbReference type="RefSeq" id="WP_015841107.1">
    <property type="nucleotide sequence ID" value="NC_012917.1"/>
</dbReference>
<dbReference type="SMR" id="C6DAW7"/>
<dbReference type="STRING" id="561230.PC1_2928"/>
<dbReference type="KEGG" id="pct:PC1_2928"/>
<dbReference type="eggNOG" id="COG0399">
    <property type="taxonomic scope" value="Bacteria"/>
</dbReference>
<dbReference type="HOGENOM" id="CLU_033332_0_3_6"/>
<dbReference type="OrthoDB" id="9804264at2"/>
<dbReference type="UniPathway" id="UPA00030"/>
<dbReference type="UniPathway" id="UPA00032">
    <property type="reaction ID" value="UER00493"/>
</dbReference>
<dbReference type="Proteomes" id="UP000002736">
    <property type="component" value="Chromosome"/>
</dbReference>
<dbReference type="GO" id="GO:0016020">
    <property type="term" value="C:membrane"/>
    <property type="evidence" value="ECO:0007669"/>
    <property type="project" value="GOC"/>
</dbReference>
<dbReference type="GO" id="GO:0030170">
    <property type="term" value="F:pyridoxal phosphate binding"/>
    <property type="evidence" value="ECO:0007669"/>
    <property type="project" value="TreeGrafter"/>
</dbReference>
<dbReference type="GO" id="GO:0099620">
    <property type="term" value="F:UDP-4-amino-4-deoxy-L-arabinose aminotransferase"/>
    <property type="evidence" value="ECO:0007669"/>
    <property type="project" value="UniProtKB-EC"/>
</dbReference>
<dbReference type="GO" id="GO:0009245">
    <property type="term" value="P:lipid A biosynthetic process"/>
    <property type="evidence" value="ECO:0007669"/>
    <property type="project" value="UniProtKB-KW"/>
</dbReference>
<dbReference type="GO" id="GO:0009103">
    <property type="term" value="P:lipopolysaccharide biosynthetic process"/>
    <property type="evidence" value="ECO:0007669"/>
    <property type="project" value="UniProtKB-UniRule"/>
</dbReference>
<dbReference type="GO" id="GO:0046677">
    <property type="term" value="P:response to antibiotic"/>
    <property type="evidence" value="ECO:0007669"/>
    <property type="project" value="UniProtKB-KW"/>
</dbReference>
<dbReference type="CDD" id="cd00616">
    <property type="entry name" value="AHBA_syn"/>
    <property type="match status" value="1"/>
</dbReference>
<dbReference type="FunFam" id="3.40.640.10:FF:000040">
    <property type="entry name" value="UDP-4-amino-4-deoxy-L-arabinose--oxoglutarate aminotransferase"/>
    <property type="match status" value="1"/>
</dbReference>
<dbReference type="FunFam" id="3.90.1150.10:FF:000030">
    <property type="entry name" value="UDP-4-amino-4-deoxy-L-arabinose--oxoglutarate aminotransferase"/>
    <property type="match status" value="1"/>
</dbReference>
<dbReference type="Gene3D" id="3.90.1150.10">
    <property type="entry name" value="Aspartate Aminotransferase, domain 1"/>
    <property type="match status" value="1"/>
</dbReference>
<dbReference type="Gene3D" id="3.40.640.10">
    <property type="entry name" value="Type I PLP-dependent aspartate aminotransferase-like (Major domain)"/>
    <property type="match status" value="1"/>
</dbReference>
<dbReference type="HAMAP" id="MF_01167">
    <property type="entry name" value="ArnB_transfer"/>
    <property type="match status" value="1"/>
</dbReference>
<dbReference type="InterPro" id="IPR022850">
    <property type="entry name" value="ArnB_NH2Trfase"/>
</dbReference>
<dbReference type="InterPro" id="IPR000653">
    <property type="entry name" value="DegT/StrS_aminotransferase"/>
</dbReference>
<dbReference type="InterPro" id="IPR015424">
    <property type="entry name" value="PyrdxlP-dep_Trfase"/>
</dbReference>
<dbReference type="InterPro" id="IPR015421">
    <property type="entry name" value="PyrdxlP-dep_Trfase_major"/>
</dbReference>
<dbReference type="InterPro" id="IPR015422">
    <property type="entry name" value="PyrdxlP-dep_Trfase_small"/>
</dbReference>
<dbReference type="NCBIfam" id="NF008658">
    <property type="entry name" value="PRK11658.1"/>
    <property type="match status" value="1"/>
</dbReference>
<dbReference type="PANTHER" id="PTHR30244">
    <property type="entry name" value="TRANSAMINASE"/>
    <property type="match status" value="1"/>
</dbReference>
<dbReference type="PANTHER" id="PTHR30244:SF41">
    <property type="entry name" value="UDP-4-AMINO-4-DEOXY-L-ARABINOSE--OXOGLUTARATE AMINOTRANSFERASE"/>
    <property type="match status" value="1"/>
</dbReference>
<dbReference type="Pfam" id="PF01041">
    <property type="entry name" value="DegT_DnrJ_EryC1"/>
    <property type="match status" value="1"/>
</dbReference>
<dbReference type="PIRSF" id="PIRSF000390">
    <property type="entry name" value="PLP_StrS"/>
    <property type="match status" value="1"/>
</dbReference>
<dbReference type="SUPFAM" id="SSF53383">
    <property type="entry name" value="PLP-dependent transferases"/>
    <property type="match status" value="1"/>
</dbReference>
<reference key="1">
    <citation type="submission" date="2009-07" db="EMBL/GenBank/DDBJ databases">
        <title>Complete sequence of Pectobacterium carotovorum subsp. carotovorum PC1.</title>
        <authorList>
            <consortium name="US DOE Joint Genome Institute"/>
            <person name="Lucas S."/>
            <person name="Copeland A."/>
            <person name="Lapidus A."/>
            <person name="Glavina del Rio T."/>
            <person name="Tice H."/>
            <person name="Bruce D."/>
            <person name="Goodwin L."/>
            <person name="Pitluck S."/>
            <person name="Munk A.C."/>
            <person name="Brettin T."/>
            <person name="Detter J.C."/>
            <person name="Han C."/>
            <person name="Tapia R."/>
            <person name="Larimer F."/>
            <person name="Land M."/>
            <person name="Hauser L."/>
            <person name="Kyrpides N."/>
            <person name="Mikhailova N."/>
            <person name="Balakrishnan V."/>
            <person name="Glasner J."/>
            <person name="Perna N.T."/>
        </authorList>
    </citation>
    <scope>NUCLEOTIDE SEQUENCE [LARGE SCALE GENOMIC DNA]</scope>
    <source>
        <strain>PC1</strain>
    </source>
</reference>
<protein>
    <recommendedName>
        <fullName evidence="1">UDP-4-amino-4-deoxy-L-arabinose--oxoglutarate aminotransferase</fullName>
        <ecNumber evidence="1">2.6.1.87</ecNumber>
    </recommendedName>
    <alternativeName>
        <fullName evidence="1">UDP-(beta-L-threo-pentapyranosyl-4''-ulose diphosphate) aminotransferase</fullName>
        <shortName evidence="1">UDP-Ara4O aminotransferase</shortName>
    </alternativeName>
    <alternativeName>
        <fullName evidence="1">UDP-4-amino-4-deoxy-L-arabinose aminotransferase</fullName>
    </alternativeName>
</protein>
<gene>
    <name evidence="1" type="primary">arnB</name>
    <name type="ordered locus">PC1_2928</name>
</gene>
<comment type="function">
    <text evidence="1">Catalyzes the conversion of UDP-4-keto-arabinose (UDP-Ara4O) to UDP-4-amino-4-deoxy-L-arabinose (UDP-L-Ara4N). The modified arabinose is attached to lipid A and is required for resistance to polymyxin and cationic antimicrobial peptides.</text>
</comment>
<comment type="catalytic activity">
    <reaction evidence="1">
        <text>UDP-4-amino-4-deoxy-beta-L-arabinose + 2-oxoglutarate = UDP-beta-L-threo-pentopyranos-4-ulose + L-glutamate</text>
        <dbReference type="Rhea" id="RHEA:24710"/>
        <dbReference type="ChEBI" id="CHEBI:16810"/>
        <dbReference type="ChEBI" id="CHEBI:29985"/>
        <dbReference type="ChEBI" id="CHEBI:58708"/>
        <dbReference type="ChEBI" id="CHEBI:58710"/>
        <dbReference type="EC" id="2.6.1.87"/>
    </reaction>
</comment>
<comment type="cofactor">
    <cofactor evidence="1">
        <name>pyridoxal 5'-phosphate</name>
        <dbReference type="ChEBI" id="CHEBI:597326"/>
    </cofactor>
</comment>
<comment type="pathway">
    <text evidence="1">Nucleotide-sugar biosynthesis; UDP-4-deoxy-4-formamido-beta-L-arabinose biosynthesis; UDP-4-deoxy-4-formamido-beta-L-arabinose from UDP-alpha-D-glucuronate: step 2/3.</text>
</comment>
<comment type="pathway">
    <text evidence="1">Bacterial outer membrane biogenesis; lipopolysaccharide biosynthesis.</text>
</comment>
<comment type="subunit">
    <text evidence="1">Homodimer.</text>
</comment>
<comment type="similarity">
    <text evidence="1">Belongs to the DegT/DnrJ/EryC1 family. ArnB subfamily.</text>
</comment>
<name>ARNB_PECCP</name>